<keyword id="KW-1185">Reference proteome</keyword>
<keyword id="KW-0687">Ribonucleoprotein</keyword>
<keyword id="KW-0689">Ribosomal protein</keyword>
<reference key="1">
    <citation type="journal article" date="2007" name="J. Bacteriol.">
        <title>Genome sequence analysis of the emerging human pathogenic acetic acid bacterium Granulibacter bethesdensis.</title>
        <authorList>
            <person name="Greenberg D.E."/>
            <person name="Porcella S.F."/>
            <person name="Zelazny A.M."/>
            <person name="Virtaneva K."/>
            <person name="Sturdevant D.E."/>
            <person name="Kupko J.J. III"/>
            <person name="Barbian K.D."/>
            <person name="Babar A."/>
            <person name="Dorward D.W."/>
            <person name="Holland S.M."/>
        </authorList>
    </citation>
    <scope>NUCLEOTIDE SEQUENCE [LARGE SCALE GENOMIC DNA]</scope>
    <source>
        <strain>ATCC BAA-1260 / CGDNIH1</strain>
    </source>
</reference>
<dbReference type="EMBL" id="CP000394">
    <property type="protein sequence ID" value="ABI61444.1"/>
    <property type="molecule type" value="Genomic_DNA"/>
</dbReference>
<dbReference type="RefSeq" id="WP_011631254.1">
    <property type="nucleotide sequence ID" value="NC_008343.2"/>
</dbReference>
<dbReference type="SMR" id="Q0BUQ8"/>
<dbReference type="STRING" id="391165.GbCGDNIH1_0546"/>
<dbReference type="KEGG" id="gbe:GbCGDNIH1_0546"/>
<dbReference type="eggNOG" id="COG0222">
    <property type="taxonomic scope" value="Bacteria"/>
</dbReference>
<dbReference type="HOGENOM" id="CLU_086499_3_0_5"/>
<dbReference type="OrthoDB" id="9811748at2"/>
<dbReference type="Proteomes" id="UP000001963">
    <property type="component" value="Chromosome"/>
</dbReference>
<dbReference type="GO" id="GO:0022625">
    <property type="term" value="C:cytosolic large ribosomal subunit"/>
    <property type="evidence" value="ECO:0007669"/>
    <property type="project" value="TreeGrafter"/>
</dbReference>
<dbReference type="GO" id="GO:0003729">
    <property type="term" value="F:mRNA binding"/>
    <property type="evidence" value="ECO:0007669"/>
    <property type="project" value="TreeGrafter"/>
</dbReference>
<dbReference type="GO" id="GO:0003735">
    <property type="term" value="F:structural constituent of ribosome"/>
    <property type="evidence" value="ECO:0007669"/>
    <property type="project" value="InterPro"/>
</dbReference>
<dbReference type="GO" id="GO:0006412">
    <property type="term" value="P:translation"/>
    <property type="evidence" value="ECO:0007669"/>
    <property type="project" value="UniProtKB-UniRule"/>
</dbReference>
<dbReference type="CDD" id="cd00387">
    <property type="entry name" value="Ribosomal_L7_L12"/>
    <property type="match status" value="1"/>
</dbReference>
<dbReference type="FunFam" id="1.20.5.710:FF:000007">
    <property type="entry name" value="50S ribosomal protein L7/L12"/>
    <property type="match status" value="1"/>
</dbReference>
<dbReference type="FunFam" id="3.30.1390.10:FF:000001">
    <property type="entry name" value="50S ribosomal protein L7/L12"/>
    <property type="match status" value="1"/>
</dbReference>
<dbReference type="Gene3D" id="3.30.1390.10">
    <property type="match status" value="1"/>
</dbReference>
<dbReference type="Gene3D" id="1.20.5.710">
    <property type="entry name" value="Single helix bin"/>
    <property type="match status" value="1"/>
</dbReference>
<dbReference type="HAMAP" id="MF_00368">
    <property type="entry name" value="Ribosomal_bL12"/>
    <property type="match status" value="1"/>
</dbReference>
<dbReference type="InterPro" id="IPR000206">
    <property type="entry name" value="Ribosomal_bL12"/>
</dbReference>
<dbReference type="InterPro" id="IPR013823">
    <property type="entry name" value="Ribosomal_bL12_C"/>
</dbReference>
<dbReference type="InterPro" id="IPR014719">
    <property type="entry name" value="Ribosomal_bL12_C/ClpS-like"/>
</dbReference>
<dbReference type="InterPro" id="IPR008932">
    <property type="entry name" value="Ribosomal_bL12_oligo"/>
</dbReference>
<dbReference type="InterPro" id="IPR036235">
    <property type="entry name" value="Ribosomal_bL12_oligo_N_sf"/>
</dbReference>
<dbReference type="NCBIfam" id="TIGR00855">
    <property type="entry name" value="L12"/>
    <property type="match status" value="1"/>
</dbReference>
<dbReference type="PANTHER" id="PTHR45987">
    <property type="entry name" value="39S RIBOSOMAL PROTEIN L12"/>
    <property type="match status" value="1"/>
</dbReference>
<dbReference type="PANTHER" id="PTHR45987:SF4">
    <property type="entry name" value="LARGE RIBOSOMAL SUBUNIT PROTEIN BL12M"/>
    <property type="match status" value="1"/>
</dbReference>
<dbReference type="Pfam" id="PF00542">
    <property type="entry name" value="Ribosomal_L12"/>
    <property type="match status" value="1"/>
</dbReference>
<dbReference type="Pfam" id="PF16320">
    <property type="entry name" value="Ribosomal_L12_N"/>
    <property type="match status" value="1"/>
</dbReference>
<dbReference type="SUPFAM" id="SSF54736">
    <property type="entry name" value="ClpS-like"/>
    <property type="match status" value="1"/>
</dbReference>
<dbReference type="SUPFAM" id="SSF48300">
    <property type="entry name" value="Ribosomal protein L7/12, oligomerisation (N-terminal) domain"/>
    <property type="match status" value="1"/>
</dbReference>
<accession>Q0BUQ8</accession>
<gene>
    <name evidence="1" type="primary">rplL</name>
    <name type="ordered locus">GbCGDNIH1_0546</name>
</gene>
<organism>
    <name type="scientific">Granulibacter bethesdensis (strain ATCC BAA-1260 / CGDNIH1)</name>
    <dbReference type="NCBI Taxonomy" id="391165"/>
    <lineage>
        <taxon>Bacteria</taxon>
        <taxon>Pseudomonadati</taxon>
        <taxon>Pseudomonadota</taxon>
        <taxon>Alphaproteobacteria</taxon>
        <taxon>Acetobacterales</taxon>
        <taxon>Acetobacteraceae</taxon>
        <taxon>Granulibacter</taxon>
    </lineage>
</organism>
<evidence type="ECO:0000255" key="1">
    <source>
        <dbReference type="HAMAP-Rule" id="MF_00368"/>
    </source>
</evidence>
<evidence type="ECO:0000305" key="2"/>
<comment type="function">
    <text evidence="1">Forms part of the ribosomal stalk which helps the ribosome interact with GTP-bound translation factors. Is thus essential for accurate translation.</text>
</comment>
<comment type="subunit">
    <text evidence="1">Homodimer. Part of the ribosomal stalk of the 50S ribosomal subunit. Forms a multimeric L10(L12)X complex, where L10 forms an elongated spine to which 2 to 4 L12 dimers bind in a sequential fashion. Binds GTP-bound translation factors.</text>
</comment>
<comment type="similarity">
    <text evidence="1">Belongs to the bacterial ribosomal protein bL12 family.</text>
</comment>
<sequence>MADLSNLVEQLSSLTVLEAAELSKLLEEKWGVSAAAPVAVAAAPAAGAAAAPAEEQTEFTVILAKAGDKKINVIKEIRTITGLGLKEAKDLVEGAPKTVKEGVNKDEAEKIKKVLEEQGAAVEIK</sequence>
<feature type="chain" id="PRO_1000007013" description="Large ribosomal subunit protein bL12">
    <location>
        <begin position="1"/>
        <end position="125"/>
    </location>
</feature>
<name>RL7_GRABC</name>
<protein>
    <recommendedName>
        <fullName evidence="1">Large ribosomal subunit protein bL12</fullName>
    </recommendedName>
    <alternativeName>
        <fullName evidence="2">50S ribosomal protein L7/L12</fullName>
    </alternativeName>
</protein>
<proteinExistence type="inferred from homology"/>